<name>GSTL3_ARATH</name>
<keyword id="KW-0963">Cytoplasm</keyword>
<keyword id="KW-0216">Detoxification</keyword>
<keyword id="KW-1185">Reference proteome</keyword>
<keyword id="KW-0808">Transferase</keyword>
<reference key="1">
    <citation type="journal article" date="2000" name="Nature">
        <title>Sequence and analysis of chromosome 5 of the plant Arabidopsis thaliana.</title>
        <authorList>
            <person name="Tabata S."/>
            <person name="Kaneko T."/>
            <person name="Nakamura Y."/>
            <person name="Kotani H."/>
            <person name="Kato T."/>
            <person name="Asamizu E."/>
            <person name="Miyajima N."/>
            <person name="Sasamoto S."/>
            <person name="Kimura T."/>
            <person name="Hosouchi T."/>
            <person name="Kawashima K."/>
            <person name="Kohara M."/>
            <person name="Matsumoto M."/>
            <person name="Matsuno A."/>
            <person name="Muraki A."/>
            <person name="Nakayama S."/>
            <person name="Nakazaki N."/>
            <person name="Naruo K."/>
            <person name="Okumura S."/>
            <person name="Shinpo S."/>
            <person name="Takeuchi C."/>
            <person name="Wada T."/>
            <person name="Watanabe A."/>
            <person name="Yamada M."/>
            <person name="Yasuda M."/>
            <person name="Sato S."/>
            <person name="de la Bastide M."/>
            <person name="Huang E."/>
            <person name="Spiegel L."/>
            <person name="Gnoj L."/>
            <person name="O'Shaughnessy A."/>
            <person name="Preston R."/>
            <person name="Habermann K."/>
            <person name="Murray J."/>
            <person name="Johnson D."/>
            <person name="Rohlfing T."/>
            <person name="Nelson J."/>
            <person name="Stoneking T."/>
            <person name="Pepin K."/>
            <person name="Spieth J."/>
            <person name="Sekhon M."/>
            <person name="Armstrong J."/>
            <person name="Becker M."/>
            <person name="Belter E."/>
            <person name="Cordum H."/>
            <person name="Cordes M."/>
            <person name="Courtney L."/>
            <person name="Courtney W."/>
            <person name="Dante M."/>
            <person name="Du H."/>
            <person name="Edwards J."/>
            <person name="Fryman J."/>
            <person name="Haakensen B."/>
            <person name="Lamar E."/>
            <person name="Latreille P."/>
            <person name="Leonard S."/>
            <person name="Meyer R."/>
            <person name="Mulvaney E."/>
            <person name="Ozersky P."/>
            <person name="Riley A."/>
            <person name="Strowmatt C."/>
            <person name="Wagner-McPherson C."/>
            <person name="Wollam A."/>
            <person name="Yoakum M."/>
            <person name="Bell M."/>
            <person name="Dedhia N."/>
            <person name="Parnell L."/>
            <person name="Shah R."/>
            <person name="Rodriguez M."/>
            <person name="Hoon See L."/>
            <person name="Vil D."/>
            <person name="Baker J."/>
            <person name="Kirchoff K."/>
            <person name="Toth K."/>
            <person name="King L."/>
            <person name="Bahret A."/>
            <person name="Miller B."/>
            <person name="Marra M.A."/>
            <person name="Martienssen R."/>
            <person name="McCombie W.R."/>
            <person name="Wilson R.K."/>
            <person name="Murphy G."/>
            <person name="Bancroft I."/>
            <person name="Volckaert G."/>
            <person name="Wambutt R."/>
            <person name="Duesterhoeft A."/>
            <person name="Stiekema W."/>
            <person name="Pohl T."/>
            <person name="Entian K.-D."/>
            <person name="Terryn N."/>
            <person name="Hartley N."/>
            <person name="Bent E."/>
            <person name="Johnson S."/>
            <person name="Langham S.-A."/>
            <person name="McCullagh B."/>
            <person name="Robben J."/>
            <person name="Grymonprez B."/>
            <person name="Zimmermann W."/>
            <person name="Ramsperger U."/>
            <person name="Wedler H."/>
            <person name="Balke K."/>
            <person name="Wedler E."/>
            <person name="Peters S."/>
            <person name="van Staveren M."/>
            <person name="Dirkse W."/>
            <person name="Mooijman P."/>
            <person name="Klein Lankhorst R."/>
            <person name="Weitzenegger T."/>
            <person name="Bothe G."/>
            <person name="Rose M."/>
            <person name="Hauf J."/>
            <person name="Berneiser S."/>
            <person name="Hempel S."/>
            <person name="Feldpausch M."/>
            <person name="Lamberth S."/>
            <person name="Villarroel R."/>
            <person name="Gielen J."/>
            <person name="Ardiles W."/>
            <person name="Bents O."/>
            <person name="Lemcke K."/>
            <person name="Kolesov G."/>
            <person name="Mayer K.F.X."/>
            <person name="Rudd S."/>
            <person name="Schoof H."/>
            <person name="Schueller C."/>
            <person name="Zaccaria P."/>
            <person name="Mewes H.-W."/>
            <person name="Bevan M."/>
            <person name="Fransz P.F."/>
        </authorList>
    </citation>
    <scope>NUCLEOTIDE SEQUENCE [LARGE SCALE GENOMIC DNA]</scope>
    <source>
        <strain>cv. Columbia</strain>
    </source>
</reference>
<reference key="2">
    <citation type="journal article" date="2017" name="Plant J.">
        <title>Araport11: a complete reannotation of the Arabidopsis thaliana reference genome.</title>
        <authorList>
            <person name="Cheng C.Y."/>
            <person name="Krishnakumar V."/>
            <person name="Chan A.P."/>
            <person name="Thibaud-Nissen F."/>
            <person name="Schobel S."/>
            <person name="Town C.D."/>
        </authorList>
    </citation>
    <scope>GENOME REANNOTATION</scope>
    <source>
        <strain>cv. Columbia</strain>
    </source>
</reference>
<reference key="3">
    <citation type="submission" date="2006-07" db="EMBL/GenBank/DDBJ databases">
        <title>Large-scale analysis of RIKEN Arabidopsis full-length (RAFL) cDNAs.</title>
        <authorList>
            <person name="Totoki Y."/>
            <person name="Seki M."/>
            <person name="Ishida J."/>
            <person name="Nakajima M."/>
            <person name="Enju A."/>
            <person name="Kamiya A."/>
            <person name="Narusaka M."/>
            <person name="Shin-i T."/>
            <person name="Nakagawa M."/>
            <person name="Sakamoto N."/>
            <person name="Oishi K."/>
            <person name="Kohara Y."/>
            <person name="Kobayashi M."/>
            <person name="Toyoda A."/>
            <person name="Sakaki Y."/>
            <person name="Sakurai T."/>
            <person name="Iida K."/>
            <person name="Akiyama K."/>
            <person name="Satou M."/>
            <person name="Toyoda T."/>
            <person name="Konagaya A."/>
            <person name="Carninci P."/>
            <person name="Kawai J."/>
            <person name="Hayashizaki Y."/>
            <person name="Shinozaki K."/>
        </authorList>
    </citation>
    <scope>NUCLEOTIDE SEQUENCE [LARGE SCALE MRNA]</scope>
    <source>
        <strain>cv. Columbia</strain>
    </source>
</reference>
<reference key="4">
    <citation type="submission" date="2002-03" db="EMBL/GenBank/DDBJ databases">
        <title>Full-length cDNA from Arabidopsis thaliana.</title>
        <authorList>
            <person name="Brover V.V."/>
            <person name="Troukhan M.E."/>
            <person name="Alexandrov N.A."/>
            <person name="Lu Y.-P."/>
            <person name="Flavell R.B."/>
            <person name="Feldmann K.A."/>
        </authorList>
    </citation>
    <scope>NUCLEOTIDE SEQUENCE [LARGE SCALE MRNA]</scope>
</reference>
<reference key="5">
    <citation type="journal article" date="2010" name="J. Biol. Chem.">
        <title>Roles for stress-inducible lambda glutathione transferases in flavonoid metabolism in plants as identified by ligand fishing.</title>
        <authorList>
            <person name="Dixon D.P."/>
            <person name="Edwards R."/>
        </authorList>
    </citation>
    <scope>FUNCTION</scope>
</reference>
<sequence>MAPSFIFVEDRPAPLDATSDPPSLFDGTTRLYTSYVCPFAQRVWITRNFKGLQEKIKLVPLDLGNRPAWYKEKVYPENKVPALEHNGKIIGESLDLIKYLDNTFEGPSLYPEDHAKREFGDELLKYTDTFVKTMYVSLKGDPSKETAPVLDYLENALYKFDDGPFFLGQLSLVDIAYIPFIERFQTVLNELFKCDITAERPKLSAWIEEINKSDGYAQTKMDPKEIVEVFKKKFM</sequence>
<dbReference type="EC" id="2.5.1.18"/>
<dbReference type="EMBL" id="AL162973">
    <property type="protein sequence ID" value="CAB86033.1"/>
    <property type="molecule type" value="Genomic_DNA"/>
</dbReference>
<dbReference type="EMBL" id="CP002688">
    <property type="protein sequence ID" value="AED90518.1"/>
    <property type="molecule type" value="Genomic_DNA"/>
</dbReference>
<dbReference type="EMBL" id="AY140069">
    <property type="protein sequence ID" value="AAM98210.1"/>
    <property type="molecule type" value="mRNA"/>
</dbReference>
<dbReference type="EMBL" id="BT002166">
    <property type="protein sequence ID" value="AAN72177.1"/>
    <property type="molecule type" value="mRNA"/>
</dbReference>
<dbReference type="EMBL" id="AK227162">
    <property type="protein sequence ID" value="BAE99204.1"/>
    <property type="molecule type" value="mRNA"/>
</dbReference>
<dbReference type="EMBL" id="AY085126">
    <property type="protein sequence ID" value="AAM61679.1"/>
    <property type="molecule type" value="mRNA"/>
</dbReference>
<dbReference type="PIR" id="T48300">
    <property type="entry name" value="T48300"/>
</dbReference>
<dbReference type="RefSeq" id="NP_195899.1">
    <property type="nucleotide sequence ID" value="NM_120357.6"/>
</dbReference>
<dbReference type="SMR" id="Q9LZ06"/>
<dbReference type="FunCoup" id="Q9LZ06">
    <property type="interactions" value="1278"/>
</dbReference>
<dbReference type="STRING" id="3702.Q9LZ06"/>
<dbReference type="PaxDb" id="3702-AT5G02790.1"/>
<dbReference type="ProteomicsDB" id="247192"/>
<dbReference type="EnsemblPlants" id="AT5G02790.1">
    <property type="protein sequence ID" value="AT5G02790.1"/>
    <property type="gene ID" value="AT5G02790"/>
</dbReference>
<dbReference type="GeneID" id="831798"/>
<dbReference type="Gramene" id="AT5G02790.1">
    <property type="protein sequence ID" value="AT5G02790.1"/>
    <property type="gene ID" value="AT5G02790"/>
</dbReference>
<dbReference type="KEGG" id="ath:AT5G02790"/>
<dbReference type="Araport" id="AT5G02790"/>
<dbReference type="TAIR" id="AT5G02790">
    <property type="gene designation" value="GSTL3"/>
</dbReference>
<dbReference type="eggNOG" id="KOG0406">
    <property type="taxonomic scope" value="Eukaryota"/>
</dbReference>
<dbReference type="HOGENOM" id="CLU_072699_0_1_1"/>
<dbReference type="InParanoid" id="Q9LZ06"/>
<dbReference type="OMA" id="YPEDHAK"/>
<dbReference type="PhylomeDB" id="Q9LZ06"/>
<dbReference type="PRO" id="PR:Q9LZ06"/>
<dbReference type="Proteomes" id="UP000006548">
    <property type="component" value="Chromosome 5"/>
</dbReference>
<dbReference type="ExpressionAtlas" id="Q9LZ06">
    <property type="expression patterns" value="baseline and differential"/>
</dbReference>
<dbReference type="GO" id="GO:0005829">
    <property type="term" value="C:cytosol"/>
    <property type="evidence" value="ECO:0007005"/>
    <property type="project" value="TAIR"/>
</dbReference>
<dbReference type="GO" id="GO:0005886">
    <property type="term" value="C:plasma membrane"/>
    <property type="evidence" value="ECO:0007005"/>
    <property type="project" value="TAIR"/>
</dbReference>
<dbReference type="GO" id="GO:0004364">
    <property type="term" value="F:glutathione transferase activity"/>
    <property type="evidence" value="ECO:0000314"/>
    <property type="project" value="TAIR"/>
</dbReference>
<dbReference type="GO" id="GO:0010731">
    <property type="term" value="P:protein glutathionylation"/>
    <property type="evidence" value="ECO:0000314"/>
    <property type="project" value="TAIR"/>
</dbReference>
<dbReference type="GO" id="GO:0009636">
    <property type="term" value="P:response to toxic substance"/>
    <property type="evidence" value="ECO:0007669"/>
    <property type="project" value="UniProtKB-KW"/>
</dbReference>
<dbReference type="CDD" id="cd03203">
    <property type="entry name" value="GST_C_Lambda"/>
    <property type="match status" value="1"/>
</dbReference>
<dbReference type="FunFam" id="3.40.30.10:FF:000091">
    <property type="entry name" value="Glutathione S-transferase L2, chloroplastic"/>
    <property type="match status" value="1"/>
</dbReference>
<dbReference type="FunFam" id="1.20.1050.10:FF:000041">
    <property type="entry name" value="Lambda class glutathione S-transferase"/>
    <property type="match status" value="1"/>
</dbReference>
<dbReference type="Gene3D" id="1.20.1050.10">
    <property type="match status" value="1"/>
</dbReference>
<dbReference type="Gene3D" id="3.40.30.10">
    <property type="entry name" value="Glutaredoxin"/>
    <property type="match status" value="1"/>
</dbReference>
<dbReference type="InterPro" id="IPR036282">
    <property type="entry name" value="Glutathione-S-Trfase_C_sf"/>
</dbReference>
<dbReference type="InterPro" id="IPR040079">
    <property type="entry name" value="Glutathione_S-Trfase"/>
</dbReference>
<dbReference type="InterPro" id="IPR004045">
    <property type="entry name" value="Glutathione_S-Trfase_N"/>
</dbReference>
<dbReference type="InterPro" id="IPR044629">
    <property type="entry name" value="GSTL1/2/3"/>
</dbReference>
<dbReference type="InterPro" id="IPR036249">
    <property type="entry name" value="Thioredoxin-like_sf"/>
</dbReference>
<dbReference type="PANTHER" id="PTHR44328">
    <property type="entry name" value="GLUTATHIONE S-TRANSFERASE L1"/>
    <property type="match status" value="1"/>
</dbReference>
<dbReference type="PANTHER" id="PTHR44328:SF6">
    <property type="entry name" value="GLUTATHIONE S-TRANSFERASE L1-RELATED"/>
    <property type="match status" value="1"/>
</dbReference>
<dbReference type="Pfam" id="PF13410">
    <property type="entry name" value="GST_C_2"/>
    <property type="match status" value="1"/>
</dbReference>
<dbReference type="Pfam" id="PF13417">
    <property type="entry name" value="GST_N_3"/>
    <property type="match status" value="1"/>
</dbReference>
<dbReference type="SFLD" id="SFLDS00019">
    <property type="entry name" value="Glutathione_Transferase_(cytos"/>
    <property type="match status" value="1"/>
</dbReference>
<dbReference type="SFLD" id="SFLDG00358">
    <property type="entry name" value="Main_(cytGST)"/>
    <property type="match status" value="1"/>
</dbReference>
<dbReference type="SUPFAM" id="SSF47616">
    <property type="entry name" value="GST C-terminal domain-like"/>
    <property type="match status" value="1"/>
</dbReference>
<dbReference type="SUPFAM" id="SSF52833">
    <property type="entry name" value="Thioredoxin-like"/>
    <property type="match status" value="1"/>
</dbReference>
<dbReference type="PROSITE" id="PS50405">
    <property type="entry name" value="GST_CTER"/>
    <property type="match status" value="1"/>
</dbReference>
<dbReference type="PROSITE" id="PS50404">
    <property type="entry name" value="GST_NTER"/>
    <property type="match status" value="1"/>
</dbReference>
<protein>
    <recommendedName>
        <fullName>Glutathione S-transferase L3</fullName>
        <shortName>AtGSTL3</shortName>
        <ecNumber>2.5.1.18</ecNumber>
    </recommendedName>
    <alternativeName>
        <fullName>GST class-lambda member 3</fullName>
    </alternativeName>
</protein>
<evidence type="ECO:0000250" key="1"/>
<evidence type="ECO:0000269" key="2">
    <source>
    </source>
</evidence>
<evidence type="ECO:0000305" key="3"/>
<gene>
    <name type="primary">GSTL3</name>
    <name type="ordered locus">At5g02790</name>
    <name type="ORF">F9G14.100</name>
</gene>
<accession>Q9LZ06</accession>
<accession>Q8LF01</accession>
<organism>
    <name type="scientific">Arabidopsis thaliana</name>
    <name type="common">Mouse-ear cress</name>
    <dbReference type="NCBI Taxonomy" id="3702"/>
    <lineage>
        <taxon>Eukaryota</taxon>
        <taxon>Viridiplantae</taxon>
        <taxon>Streptophyta</taxon>
        <taxon>Embryophyta</taxon>
        <taxon>Tracheophyta</taxon>
        <taxon>Spermatophyta</taxon>
        <taxon>Magnoliopsida</taxon>
        <taxon>eudicotyledons</taxon>
        <taxon>Gunneridae</taxon>
        <taxon>Pentapetalae</taxon>
        <taxon>rosids</taxon>
        <taxon>malvids</taxon>
        <taxon>Brassicales</taxon>
        <taxon>Brassicaceae</taxon>
        <taxon>Camelineae</taxon>
        <taxon>Arabidopsis</taxon>
    </lineage>
</organism>
<feature type="chain" id="PRO_0000413579" description="Glutathione S-transferase L3">
    <location>
        <begin position="1"/>
        <end position="235"/>
    </location>
</feature>
<feature type="domain" description="GST N-terminal">
    <location>
        <begin position="27"/>
        <end position="108"/>
    </location>
</feature>
<feature type="domain" description="GST C-terminal">
    <location>
        <begin position="86"/>
        <end position="230"/>
    </location>
</feature>
<feature type="binding site" evidence="1">
    <location>
        <begin position="37"/>
        <end position="38"/>
    </location>
    <ligand>
        <name>glutathione</name>
        <dbReference type="ChEBI" id="CHEBI:57925"/>
    </ligand>
</feature>
<feature type="binding site" evidence="1">
    <location>
        <begin position="65"/>
        <end position="66"/>
    </location>
    <ligand>
        <name>glutathione</name>
        <dbReference type="ChEBI" id="CHEBI:57925"/>
    </ligand>
</feature>
<feature type="binding site" evidence="1">
    <location>
        <begin position="79"/>
        <end position="80"/>
    </location>
    <ligand>
        <name>glutathione</name>
        <dbReference type="ChEBI" id="CHEBI:57925"/>
    </ligand>
</feature>
<feature type="binding site" evidence="1">
    <location>
        <begin position="92"/>
        <end position="93"/>
    </location>
    <ligand>
        <name>glutathione</name>
        <dbReference type="ChEBI" id="CHEBI:57925"/>
    </ligand>
</feature>
<feature type="sequence conflict" description="In Ref. 4; AAM61679." evidence="3" ref="4">
    <original>N</original>
    <variation>D</variation>
    <location>
        <position position="189"/>
    </location>
</feature>
<comment type="function">
    <text evidence="2">Catalyzes the glutathione-dependent reduction of S-glutathionylquercetin to quercetin.</text>
</comment>
<comment type="catalytic activity">
    <reaction>
        <text>RX + glutathione = an S-substituted glutathione + a halide anion + H(+)</text>
        <dbReference type="Rhea" id="RHEA:16437"/>
        <dbReference type="ChEBI" id="CHEBI:15378"/>
        <dbReference type="ChEBI" id="CHEBI:16042"/>
        <dbReference type="ChEBI" id="CHEBI:17792"/>
        <dbReference type="ChEBI" id="CHEBI:57925"/>
        <dbReference type="ChEBI" id="CHEBI:90779"/>
        <dbReference type="EC" id="2.5.1.18"/>
    </reaction>
</comment>
<comment type="subcellular location">
    <subcellularLocation>
        <location evidence="3">Cytoplasm</location>
        <location evidence="3">Cytosol</location>
    </subcellularLocation>
</comment>
<comment type="similarity">
    <text evidence="3">Belongs to the GST superfamily. Lambda family.</text>
</comment>
<proteinExistence type="evidence at transcript level"/>